<dbReference type="EC" id="3.2.1.20"/>
<dbReference type="EMBL" id="AF545044">
    <property type="protein sequence ID" value="AAN74755.1"/>
    <property type="molecule type" value="mRNA"/>
</dbReference>
<dbReference type="EMBL" id="AF545045">
    <property type="protein sequence ID" value="AAN74756.1"/>
    <property type="molecule type" value="mRNA"/>
</dbReference>
<dbReference type="EMBL" id="AF545046">
    <property type="protein sequence ID" value="AAN74757.1"/>
    <property type="molecule type" value="mRNA"/>
</dbReference>
<dbReference type="EMBL" id="AK074037">
    <property type="protein sequence ID" value="BAB84863.1"/>
    <property type="status" value="ALT_INIT"/>
    <property type="molecule type" value="mRNA"/>
</dbReference>
<dbReference type="EMBL" id="AC012651">
    <property type="status" value="NOT_ANNOTATED_CDS"/>
    <property type="molecule type" value="Genomic_DNA"/>
</dbReference>
<dbReference type="EMBL" id="AC022468">
    <property type="status" value="NOT_ANNOTATED_CDS"/>
    <property type="molecule type" value="Genomic_DNA"/>
</dbReference>
<dbReference type="EMBL" id="BC059406">
    <property type="protein sequence ID" value="AAH59406.1"/>
    <property type="molecule type" value="mRNA"/>
</dbReference>
<dbReference type="EMBL" id="BC093833">
    <property type="protein sequence ID" value="AAH93833.1"/>
    <property type="molecule type" value="mRNA"/>
</dbReference>
<dbReference type="EMBL" id="AF525397">
    <property type="protein sequence ID" value="AAO14993.1"/>
    <property type="molecule type" value="mRNA"/>
</dbReference>
<dbReference type="CCDS" id="CCDS10084.1"/>
<dbReference type="RefSeq" id="NP_001380857.1">
    <property type="nucleotide sequence ID" value="NM_001393928.1"/>
</dbReference>
<dbReference type="RefSeq" id="NP_001380858.1">
    <property type="nucleotide sequence ID" value="NM_001393929.1"/>
</dbReference>
<dbReference type="RefSeq" id="NP_937784.2">
    <property type="nucleotide sequence ID" value="NM_198141.3"/>
</dbReference>
<dbReference type="SMR" id="Q8TET4"/>
<dbReference type="BioGRID" id="108866">
    <property type="interactions" value="6"/>
</dbReference>
<dbReference type="FunCoup" id="Q8TET4">
    <property type="interactions" value="1750"/>
</dbReference>
<dbReference type="IntAct" id="Q8TET4">
    <property type="interactions" value="3"/>
</dbReference>
<dbReference type="STRING" id="9606.ENSP00000326227"/>
<dbReference type="BindingDB" id="Q8TET4"/>
<dbReference type="ChEMBL" id="CHEMBL2520"/>
<dbReference type="DrugBank" id="DB01841">
    <property type="generic name" value="4,6-Dideoxyglucose"/>
</dbReference>
<dbReference type="DrugBank" id="DB06645">
    <property type="generic name" value="Anamorelin"/>
</dbReference>
<dbReference type="DrugBank" id="DB02379">
    <property type="generic name" value="Beta-D-Glucose"/>
</dbReference>
<dbReference type="DrugBank" id="DB03206">
    <property type="generic name" value="Duvoglustat"/>
</dbReference>
<dbReference type="DrugBank" id="DB00491">
    <property type="generic name" value="Miglitol"/>
</dbReference>
<dbReference type="DrugBank" id="DB14128">
    <property type="generic name" value="Nadide"/>
</dbReference>
<dbReference type="CAZy" id="GH31">
    <property type="family name" value="Glycoside Hydrolase Family 31"/>
</dbReference>
<dbReference type="GlyGen" id="Q8TET4">
    <property type="glycosylation" value="2 sites, 1 O-linked glycan (1 site)"/>
</dbReference>
<dbReference type="iPTMnet" id="Q8TET4"/>
<dbReference type="PhosphoSitePlus" id="Q8TET4"/>
<dbReference type="BioMuta" id="GANC"/>
<dbReference type="DMDM" id="296439340"/>
<dbReference type="jPOST" id="Q8TET4"/>
<dbReference type="MassIVE" id="Q8TET4"/>
<dbReference type="PaxDb" id="9606-ENSP00000326227"/>
<dbReference type="PeptideAtlas" id="Q8TET4"/>
<dbReference type="ProteomicsDB" id="74496"/>
<dbReference type="Pumba" id="Q8TET4"/>
<dbReference type="Antibodypedia" id="1713">
    <property type="antibodies" value="113 antibodies from 22 providers"/>
</dbReference>
<dbReference type="DNASU" id="2595"/>
<dbReference type="Ensembl" id="ENST00000318010.13">
    <property type="protein sequence ID" value="ENSP00000326227.8"/>
    <property type="gene ID" value="ENSG00000214013.10"/>
</dbReference>
<dbReference type="GeneID" id="2595"/>
<dbReference type="KEGG" id="hsa:2595"/>
<dbReference type="MANE-Select" id="ENST00000318010.13">
    <property type="protein sequence ID" value="ENSP00000326227.8"/>
    <property type="RefSeq nucleotide sequence ID" value="NM_198141.3"/>
    <property type="RefSeq protein sequence ID" value="NP_937784.2"/>
</dbReference>
<dbReference type="UCSC" id="uc001zpi.4">
    <property type="organism name" value="human"/>
</dbReference>
<dbReference type="AGR" id="HGNC:4139"/>
<dbReference type="CTD" id="2595"/>
<dbReference type="DisGeNET" id="2595"/>
<dbReference type="GeneCards" id="GANC"/>
<dbReference type="HGNC" id="HGNC:4139">
    <property type="gene designation" value="GANC"/>
</dbReference>
<dbReference type="HPA" id="ENSG00000214013">
    <property type="expression patterns" value="Low tissue specificity"/>
</dbReference>
<dbReference type="MIM" id="104180">
    <property type="type" value="gene"/>
</dbReference>
<dbReference type="neXtProt" id="NX_Q8TET4"/>
<dbReference type="OpenTargets" id="ENSG00000214013"/>
<dbReference type="PharmGKB" id="PA28552"/>
<dbReference type="VEuPathDB" id="HostDB:ENSG00000214013"/>
<dbReference type="eggNOG" id="KOG1066">
    <property type="taxonomic scope" value="Eukaryota"/>
</dbReference>
<dbReference type="GeneTree" id="ENSGT00940000159230"/>
<dbReference type="HOGENOM" id="CLU_000631_7_0_1"/>
<dbReference type="InParanoid" id="Q8TET4"/>
<dbReference type="OMA" id="MHNVYGH"/>
<dbReference type="OrthoDB" id="3237269at2759"/>
<dbReference type="PAN-GO" id="Q8TET4">
    <property type="GO annotations" value="2 GO annotations based on evolutionary models"/>
</dbReference>
<dbReference type="PhylomeDB" id="Q8TET4"/>
<dbReference type="TreeFam" id="TF300337"/>
<dbReference type="PathwayCommons" id="Q8TET4"/>
<dbReference type="SignaLink" id="Q8TET4"/>
<dbReference type="BioGRID-ORCS" id="2595">
    <property type="hits" value="7 hits in 1161 CRISPR screens"/>
</dbReference>
<dbReference type="CD-CODE" id="91857CE7">
    <property type="entry name" value="Nucleolus"/>
</dbReference>
<dbReference type="ChiTaRS" id="GANC">
    <property type="organism name" value="human"/>
</dbReference>
<dbReference type="GeneWiki" id="GANC"/>
<dbReference type="GenomeRNAi" id="2595"/>
<dbReference type="Pharos" id="Q8TET4">
    <property type="development level" value="Tchem"/>
</dbReference>
<dbReference type="PRO" id="PR:Q8TET4"/>
<dbReference type="Proteomes" id="UP000005640">
    <property type="component" value="Chromosome 15"/>
</dbReference>
<dbReference type="RNAct" id="Q8TET4">
    <property type="molecule type" value="protein"/>
</dbReference>
<dbReference type="Bgee" id="ENSG00000214013">
    <property type="expression patterns" value="Expressed in sural nerve and 129 other cell types or tissues"/>
</dbReference>
<dbReference type="ExpressionAtlas" id="Q8TET4">
    <property type="expression patterns" value="baseline and differential"/>
</dbReference>
<dbReference type="GO" id="GO:0004558">
    <property type="term" value="F:alpha-1,4-glucosidase activity"/>
    <property type="evidence" value="ECO:0000318"/>
    <property type="project" value="GO_Central"/>
</dbReference>
<dbReference type="GO" id="GO:0030246">
    <property type="term" value="F:carbohydrate binding"/>
    <property type="evidence" value="ECO:0007669"/>
    <property type="project" value="InterPro"/>
</dbReference>
<dbReference type="GO" id="GO:0005975">
    <property type="term" value="P:carbohydrate metabolic process"/>
    <property type="evidence" value="ECO:0007669"/>
    <property type="project" value="InterPro"/>
</dbReference>
<dbReference type="GO" id="GO:0006491">
    <property type="term" value="P:N-glycan processing"/>
    <property type="evidence" value="ECO:0000318"/>
    <property type="project" value="GO_Central"/>
</dbReference>
<dbReference type="CDD" id="cd06603">
    <property type="entry name" value="GH31_GANC_GANAB_alpha"/>
    <property type="match status" value="1"/>
</dbReference>
<dbReference type="CDD" id="cd14752">
    <property type="entry name" value="GH31_N"/>
    <property type="match status" value="1"/>
</dbReference>
<dbReference type="FunFam" id="3.20.20.80:FF:000046">
    <property type="entry name" value="Glucosidase alpha, neutral C"/>
    <property type="match status" value="1"/>
</dbReference>
<dbReference type="FunFam" id="3.20.20.80:FF:000039">
    <property type="entry name" value="Glucosidase, alpha neutral C"/>
    <property type="match status" value="1"/>
</dbReference>
<dbReference type="FunFam" id="2.60.40.1180:FF:000023">
    <property type="entry name" value="neutral alpha-glucosidase AB isoform X2"/>
    <property type="match status" value="1"/>
</dbReference>
<dbReference type="Gene3D" id="3.20.20.80">
    <property type="entry name" value="Glycosidases"/>
    <property type="match status" value="2"/>
</dbReference>
<dbReference type="Gene3D" id="2.60.40.1760">
    <property type="entry name" value="glycosyl hydrolase (family 31)"/>
    <property type="match status" value="1"/>
</dbReference>
<dbReference type="Gene3D" id="2.60.40.1180">
    <property type="entry name" value="Golgi alpha-mannosidase II"/>
    <property type="match status" value="2"/>
</dbReference>
<dbReference type="InterPro" id="IPR011013">
    <property type="entry name" value="Gal_mutarotase_sf_dom"/>
</dbReference>
<dbReference type="InterPro" id="IPR030458">
    <property type="entry name" value="Glyco_hydro_31_AS"/>
</dbReference>
<dbReference type="InterPro" id="IPR048395">
    <property type="entry name" value="Glyco_hydro_31_C"/>
</dbReference>
<dbReference type="InterPro" id="IPR025887">
    <property type="entry name" value="Glyco_hydro_31_N_dom"/>
</dbReference>
<dbReference type="InterPro" id="IPR000322">
    <property type="entry name" value="Glyco_hydro_31_TIM"/>
</dbReference>
<dbReference type="InterPro" id="IPR013780">
    <property type="entry name" value="Glyco_hydro_b"/>
</dbReference>
<dbReference type="InterPro" id="IPR017853">
    <property type="entry name" value="Glycoside_hydrolase_SF"/>
</dbReference>
<dbReference type="PANTHER" id="PTHR22762">
    <property type="entry name" value="ALPHA-GLUCOSIDASE"/>
    <property type="match status" value="1"/>
</dbReference>
<dbReference type="PANTHER" id="PTHR22762:SF60">
    <property type="entry name" value="NEUTRAL ALPHA-GLUCOSIDASE C"/>
    <property type="match status" value="1"/>
</dbReference>
<dbReference type="Pfam" id="PF13802">
    <property type="entry name" value="Gal_mutarotas_2"/>
    <property type="match status" value="1"/>
</dbReference>
<dbReference type="Pfam" id="PF01055">
    <property type="entry name" value="Glyco_hydro_31_2nd"/>
    <property type="match status" value="1"/>
</dbReference>
<dbReference type="Pfam" id="PF21365">
    <property type="entry name" value="Glyco_hydro_31_3rd"/>
    <property type="match status" value="1"/>
</dbReference>
<dbReference type="SUPFAM" id="SSF51445">
    <property type="entry name" value="(Trans)glycosidases"/>
    <property type="match status" value="1"/>
</dbReference>
<dbReference type="SUPFAM" id="SSF74650">
    <property type="entry name" value="Galactose mutarotase-like"/>
    <property type="match status" value="1"/>
</dbReference>
<dbReference type="SUPFAM" id="SSF51011">
    <property type="entry name" value="Glycosyl hydrolase domain"/>
    <property type="match status" value="1"/>
</dbReference>
<dbReference type="PROSITE" id="PS00129">
    <property type="entry name" value="GLYCOSYL_HYDROL_F31_1"/>
    <property type="match status" value="1"/>
</dbReference>
<feature type="chain" id="PRO_0000185364" description="Neutral alpha-glucosidase C">
    <location>
        <begin position="1"/>
        <end position="914"/>
    </location>
</feature>
<feature type="active site" description="Nucleophile" evidence="2">
    <location>
        <position position="511"/>
    </location>
</feature>
<feature type="active site" evidence="1">
    <location>
        <position position="514"/>
    </location>
</feature>
<feature type="active site" description="Proton donor" evidence="1">
    <location>
        <position position="587"/>
    </location>
</feature>
<feature type="sequence variant" id="VAR_018984" description="In dbSNP:rs8043515." evidence="3 4 5">
    <original>L</original>
    <variation>V</variation>
    <location>
        <position position="11"/>
    </location>
</feature>
<feature type="sequence variant" id="VAR_018985" description="In dbSNP:rs8024732." evidence="3 4 5">
    <original>Q</original>
    <variation>R</variation>
    <location>
        <position position="44"/>
    </location>
</feature>
<feature type="sequence variant" id="VAR_018986" description="In dbSNP:rs75876980." evidence="3">
    <original>I</original>
    <variation>M</variation>
    <location>
        <position position="153"/>
    </location>
</feature>
<feature type="sequence variant" id="VAR_056237" description="In dbSNP:rs16973015.">
    <original>I</original>
    <variation>V</variation>
    <location>
        <position position="166"/>
    </location>
</feature>
<feature type="sequence variant" id="VAR_018987" description="In dbSNP:rs2578652." evidence="3">
    <original>D</original>
    <variation>E</variation>
    <location>
        <position position="443"/>
    </location>
</feature>
<feature type="sequence variant" id="VAR_018988" description="In dbSNP:rs7181742." evidence="3">
    <original>F</original>
    <variation>S</variation>
    <location>
        <position position="845"/>
    </location>
</feature>
<feature type="sequence variant" id="VAR_018989" description="In dbSNP:rs7180279." evidence="3">
    <original>Q</original>
    <variation>R</variation>
    <location>
        <position position="848"/>
    </location>
</feature>
<feature type="sequence conflict" description="In Ref. 5; AAO14993." evidence="6" ref="5">
    <original>T</original>
    <variation>A</variation>
    <location>
        <position position="180"/>
    </location>
</feature>
<comment type="function">
    <text evidence="3">Has alpha-glucosidase activity.</text>
</comment>
<comment type="catalytic activity">
    <reaction>
        <text>Hydrolysis of terminal, non-reducing (1-&gt;4)-linked alpha-D-glucose residues with release of alpha-D-glucose.</text>
        <dbReference type="EC" id="3.2.1.20"/>
    </reaction>
</comment>
<comment type="similarity">
    <text evidence="6">Belongs to the glycosyl hydrolase 31 family.</text>
</comment>
<comment type="sequence caution" evidence="6">
    <conflict type="erroneous initiation">
        <sequence resource="EMBL-CDS" id="BAB84863"/>
    </conflict>
    <text>Extended N-terminus.</text>
</comment>
<proteinExistence type="evidence at protein level"/>
<gene>
    <name type="primary">GANC</name>
</gene>
<reference key="1">
    <citation type="journal article" date="2002" name="Proc. Natl. Acad. Sci. U.S.A.">
        <title>Computer assisted cloning of human neutral alpha glucosidase C (GANC): a new paralog in the glycosyl hydrolase gene family 31.</title>
        <authorList>
            <person name="Hirschhorn R."/>
            <person name="Huie M.L."/>
            <person name="Kasper J.S."/>
        </authorList>
    </citation>
    <scope>NUCLEOTIDE SEQUENCE [MRNA]</scope>
    <scope>VARIANTS VAL-11; ARG-44; MET-153; GLU-443; SER-845 AND ARG-848</scope>
    <scope>FUNCTION</scope>
    <source>
        <tissue>Lymphoid tissue</tissue>
    </source>
</reference>
<reference key="2">
    <citation type="submission" date="2002-01" db="EMBL/GenBank/DDBJ databases">
        <title>The nucleotide sequence of a long cDNA clone isolated from human spleen.</title>
        <authorList>
            <person name="Ohara O."/>
            <person name="Nagase T."/>
            <person name="Kikuno R."/>
            <person name="Okumura K."/>
        </authorList>
    </citation>
    <scope>NUCLEOTIDE SEQUENCE [LARGE SCALE MRNA]</scope>
    <scope>VARIANTS VAL-11 AND ARG-44</scope>
    <source>
        <tissue>Spleen</tissue>
    </source>
</reference>
<reference key="3">
    <citation type="journal article" date="2006" name="Nature">
        <title>Analysis of the DNA sequence and duplication history of human chromosome 15.</title>
        <authorList>
            <person name="Zody M.C."/>
            <person name="Garber M."/>
            <person name="Sharpe T."/>
            <person name="Young S.K."/>
            <person name="Rowen L."/>
            <person name="O'Neill K."/>
            <person name="Whittaker C.A."/>
            <person name="Kamal M."/>
            <person name="Chang J.L."/>
            <person name="Cuomo C.A."/>
            <person name="Dewar K."/>
            <person name="FitzGerald M.G."/>
            <person name="Kodira C.D."/>
            <person name="Madan A."/>
            <person name="Qin S."/>
            <person name="Yang X."/>
            <person name="Abbasi N."/>
            <person name="Abouelleil A."/>
            <person name="Arachchi H.M."/>
            <person name="Baradarani L."/>
            <person name="Birditt B."/>
            <person name="Bloom S."/>
            <person name="Bloom T."/>
            <person name="Borowsky M.L."/>
            <person name="Burke J."/>
            <person name="Butler J."/>
            <person name="Cook A."/>
            <person name="DeArellano K."/>
            <person name="DeCaprio D."/>
            <person name="Dorris L. III"/>
            <person name="Dors M."/>
            <person name="Eichler E.E."/>
            <person name="Engels R."/>
            <person name="Fahey J."/>
            <person name="Fleetwood P."/>
            <person name="Friedman C."/>
            <person name="Gearin G."/>
            <person name="Hall J.L."/>
            <person name="Hensley G."/>
            <person name="Johnson E."/>
            <person name="Jones C."/>
            <person name="Kamat A."/>
            <person name="Kaur A."/>
            <person name="Locke D.P."/>
            <person name="Madan A."/>
            <person name="Munson G."/>
            <person name="Jaffe D.B."/>
            <person name="Lui A."/>
            <person name="Macdonald P."/>
            <person name="Mauceli E."/>
            <person name="Naylor J.W."/>
            <person name="Nesbitt R."/>
            <person name="Nicol R."/>
            <person name="O'Leary S.B."/>
            <person name="Ratcliffe A."/>
            <person name="Rounsley S."/>
            <person name="She X."/>
            <person name="Sneddon K.M.B."/>
            <person name="Stewart S."/>
            <person name="Sougnez C."/>
            <person name="Stone S.M."/>
            <person name="Topham K."/>
            <person name="Vincent D."/>
            <person name="Wang S."/>
            <person name="Zimmer A.R."/>
            <person name="Birren B.W."/>
            <person name="Hood L."/>
            <person name="Lander E.S."/>
            <person name="Nusbaum C."/>
        </authorList>
    </citation>
    <scope>NUCLEOTIDE SEQUENCE [LARGE SCALE GENOMIC DNA]</scope>
</reference>
<reference key="4">
    <citation type="journal article" date="2004" name="Genome Res.">
        <title>The status, quality, and expansion of the NIH full-length cDNA project: the Mammalian Gene Collection (MGC).</title>
        <authorList>
            <consortium name="The MGC Project Team"/>
        </authorList>
    </citation>
    <scope>NUCLEOTIDE SEQUENCE [LARGE SCALE MRNA]</scope>
    <scope>VARIANTS VAL-11 AND ARG-44</scope>
    <source>
        <tissue>Colon</tissue>
        <tissue>Placenta</tissue>
    </source>
</reference>
<reference key="5">
    <citation type="submission" date="2002-06" db="EMBL/GenBank/DDBJ databases">
        <authorList>
            <person name="Ben-Asher E."/>
        </authorList>
    </citation>
    <scope>NUCLEOTIDE SEQUENCE [MRNA] OF 146-914</scope>
    <source>
        <tissue>Erythroid cell</tissue>
    </source>
</reference>
<accession>Q8TET4</accession>
<accession>Q52LQ4</accession>
<accession>Q8IWZ0</accession>
<accession>Q8IZM4</accession>
<accession>Q8IZM5</accession>
<keyword id="KW-0326">Glycosidase</keyword>
<keyword id="KW-0378">Hydrolase</keyword>
<keyword id="KW-1267">Proteomics identification</keyword>
<keyword id="KW-1185">Reference proteome</keyword>
<organism>
    <name type="scientific">Homo sapiens</name>
    <name type="common">Human</name>
    <dbReference type="NCBI Taxonomy" id="9606"/>
    <lineage>
        <taxon>Eukaryota</taxon>
        <taxon>Metazoa</taxon>
        <taxon>Chordata</taxon>
        <taxon>Craniata</taxon>
        <taxon>Vertebrata</taxon>
        <taxon>Euteleostomi</taxon>
        <taxon>Mammalia</taxon>
        <taxon>Eutheria</taxon>
        <taxon>Euarchontoglires</taxon>
        <taxon>Primates</taxon>
        <taxon>Haplorrhini</taxon>
        <taxon>Catarrhini</taxon>
        <taxon>Hominidae</taxon>
        <taxon>Homo</taxon>
    </lineage>
</organism>
<name>GANC_HUMAN</name>
<evidence type="ECO:0000250" key="1"/>
<evidence type="ECO:0000255" key="2">
    <source>
        <dbReference type="PROSITE-ProRule" id="PRU10066"/>
    </source>
</evidence>
<evidence type="ECO:0000269" key="3">
    <source>
    </source>
</evidence>
<evidence type="ECO:0000269" key="4">
    <source>
    </source>
</evidence>
<evidence type="ECO:0000269" key="5">
    <source ref="2"/>
</evidence>
<evidence type="ECO:0000305" key="6"/>
<protein>
    <recommendedName>
        <fullName>Neutral alpha-glucosidase C</fullName>
        <ecNumber>3.2.1.20</ecNumber>
    </recommendedName>
</protein>
<sequence>MEAAVKEEISLEDEAVDKNIFRDCNKIAFYRRQKQWLSKKSTYQALLDSVTTDEDSTRFQIINEASKVPLLAEIYGIEGNIFRLKINEETPLKPRFEVPDVLTSKPSTVRLISCSGDTGSLILADGKGDLKCHITANPFKVDLVSEEEVVISINSLGQLYFEHLQILHKQRAAKENEEETSVDTSQENQEDLGLWEEKFGKFVDIKANGPSSIGLDFSLHGFEHLYGIPQHAESHQLKNTGDGDAYRLYNLDVYGYQIYDKMGIYGSVPYLLAHKLGRTIGIFWLNASETLVEINTEPAVEYTLTQMGPVAAKQKVRSRTHVHWMSESGIIDVFLLTGPTPSDVFKQYSHLTGTQAMPPLFSLGYHQCRWNYEDEQDVKAVDAGFDEHDIPYDAMWLDIEHTEGKRYFTWDKNRFPNPKRMQELLRSKKRKLVVISDPHIKIDPDYSVYVKAKDQGFFVKNQEGEDFEGVCWPGLSSYLDFTNPKVREWYSSLFAFPVYQGSTDILFLWNDMNEPSVFRGPEQTMQKNAIHHGNWEHRELHNIYGFYHQMATAEGLIKRSKGKERPFVLTRSFFAGSQKYGAVWTGDNTAEWSNLKISIPMLLTLSITGISFCGADIGGFIGNPETELLVRWYQAGAYQPFFRGHATMNTKRREPWLFGEEHTRLIREAIRERYGLLPYWYSLFYHAHVASQPVMRPLWVEFPDELKTFDMEDEYMLGSALLVHPVTEPKATTVDVFLPGSNEVWYDYKTFAHWEGGCTVKIPVALDTIPVFQRGGSVIPIKTTVGKSTGWMTESSYGLRVALSTKGSSVGELYLDDGHSFQYLHQKQFLHRKFSFCSSVLINSFADQRGHYPSKCVVEKILVLGFRKEPSSVTTHSSDGKDQPVAFTYCAKTSILSLEKLSLNIATDWEVRII</sequence>